<dbReference type="EMBL" id="CP000948">
    <property type="protein sequence ID" value="ACB04746.1"/>
    <property type="molecule type" value="Genomic_DNA"/>
</dbReference>
<dbReference type="RefSeq" id="WP_000831330.1">
    <property type="nucleotide sequence ID" value="NC_010473.1"/>
</dbReference>
<dbReference type="SMR" id="B1X9T1"/>
<dbReference type="GeneID" id="98190980"/>
<dbReference type="KEGG" id="ecd:ECDH10B_3889"/>
<dbReference type="HOGENOM" id="CLU_129938_2_1_6"/>
<dbReference type="GO" id="GO:1990904">
    <property type="term" value="C:ribonucleoprotein complex"/>
    <property type="evidence" value="ECO:0007669"/>
    <property type="project" value="UniProtKB-KW"/>
</dbReference>
<dbReference type="GO" id="GO:0005840">
    <property type="term" value="C:ribosome"/>
    <property type="evidence" value="ECO:0007669"/>
    <property type="project" value="UniProtKB-KW"/>
</dbReference>
<dbReference type="GO" id="GO:0003735">
    <property type="term" value="F:structural constituent of ribosome"/>
    <property type="evidence" value="ECO:0007669"/>
    <property type="project" value="InterPro"/>
</dbReference>
<dbReference type="GO" id="GO:0006412">
    <property type="term" value="P:translation"/>
    <property type="evidence" value="ECO:0007669"/>
    <property type="project" value="UniProtKB-UniRule"/>
</dbReference>
<dbReference type="FunFam" id="1.10.287.3980:FF:000001">
    <property type="entry name" value="Mitochondrial ribosomal protein L34"/>
    <property type="match status" value="1"/>
</dbReference>
<dbReference type="Gene3D" id="1.10.287.3980">
    <property type="match status" value="1"/>
</dbReference>
<dbReference type="HAMAP" id="MF_00391">
    <property type="entry name" value="Ribosomal_bL34"/>
    <property type="match status" value="1"/>
</dbReference>
<dbReference type="InterPro" id="IPR000271">
    <property type="entry name" value="Ribosomal_bL34"/>
</dbReference>
<dbReference type="InterPro" id="IPR020939">
    <property type="entry name" value="Ribosomal_bL34_CS"/>
</dbReference>
<dbReference type="NCBIfam" id="TIGR01030">
    <property type="entry name" value="rpmH_bact"/>
    <property type="match status" value="1"/>
</dbReference>
<dbReference type="PANTHER" id="PTHR14503:SF4">
    <property type="entry name" value="LARGE RIBOSOMAL SUBUNIT PROTEIN BL34M"/>
    <property type="match status" value="1"/>
</dbReference>
<dbReference type="PANTHER" id="PTHR14503">
    <property type="entry name" value="MITOCHONDRIAL RIBOSOMAL PROTEIN 34 FAMILY MEMBER"/>
    <property type="match status" value="1"/>
</dbReference>
<dbReference type="Pfam" id="PF00468">
    <property type="entry name" value="Ribosomal_L34"/>
    <property type="match status" value="1"/>
</dbReference>
<dbReference type="PROSITE" id="PS00784">
    <property type="entry name" value="RIBOSOMAL_L34"/>
    <property type="match status" value="1"/>
</dbReference>
<proteinExistence type="inferred from homology"/>
<reference key="1">
    <citation type="journal article" date="2008" name="J. Bacteriol.">
        <title>The complete genome sequence of Escherichia coli DH10B: insights into the biology of a laboratory workhorse.</title>
        <authorList>
            <person name="Durfee T."/>
            <person name="Nelson R."/>
            <person name="Baldwin S."/>
            <person name="Plunkett G. III"/>
            <person name="Burland V."/>
            <person name="Mau B."/>
            <person name="Petrosino J.F."/>
            <person name="Qin X."/>
            <person name="Muzny D.M."/>
            <person name="Ayele M."/>
            <person name="Gibbs R.A."/>
            <person name="Csorgo B."/>
            <person name="Posfai G."/>
            <person name="Weinstock G.M."/>
            <person name="Blattner F.R."/>
        </authorList>
    </citation>
    <scope>NUCLEOTIDE SEQUENCE [LARGE SCALE GENOMIC DNA]</scope>
    <source>
        <strain>K12 / DH10B</strain>
    </source>
</reference>
<sequence length="46" mass="5380">MKRTFQPSVLKRNRSHGFRARMATKNGRQVLARRRAKGRARLTVSK</sequence>
<feature type="chain" id="PRO_1000196042" description="Large ribosomal subunit protein bL34">
    <location>
        <begin position="1"/>
        <end position="46"/>
    </location>
</feature>
<accession>B1X9T1</accession>
<evidence type="ECO:0000255" key="1">
    <source>
        <dbReference type="HAMAP-Rule" id="MF_00391"/>
    </source>
</evidence>
<evidence type="ECO:0000305" key="2"/>
<gene>
    <name evidence="1" type="primary">rpmH</name>
    <name type="ordered locus">ECDH10B_3889</name>
</gene>
<protein>
    <recommendedName>
        <fullName evidence="1">Large ribosomal subunit protein bL34</fullName>
    </recommendedName>
    <alternativeName>
        <fullName evidence="2">50S ribosomal protein L34</fullName>
    </alternativeName>
</protein>
<organism>
    <name type="scientific">Escherichia coli (strain K12 / DH10B)</name>
    <dbReference type="NCBI Taxonomy" id="316385"/>
    <lineage>
        <taxon>Bacteria</taxon>
        <taxon>Pseudomonadati</taxon>
        <taxon>Pseudomonadota</taxon>
        <taxon>Gammaproteobacteria</taxon>
        <taxon>Enterobacterales</taxon>
        <taxon>Enterobacteriaceae</taxon>
        <taxon>Escherichia</taxon>
    </lineage>
</organism>
<name>RL34_ECODH</name>
<keyword id="KW-0687">Ribonucleoprotein</keyword>
<keyword id="KW-0689">Ribosomal protein</keyword>
<comment type="similarity">
    <text evidence="1">Belongs to the bacterial ribosomal protein bL34 family.</text>
</comment>